<feature type="chain" id="PRO_0000414716" description="Ras/Rap GTPase-activating protein SynGAP">
    <location>
        <begin position="1"/>
        <end position="1340"/>
    </location>
</feature>
<feature type="domain" description="PH" evidence="5">
    <location>
        <begin position="150"/>
        <end position="251"/>
    </location>
</feature>
<feature type="domain" description="C2" evidence="4">
    <location>
        <begin position="242"/>
        <end position="363"/>
    </location>
</feature>
<feature type="domain" description="Ras-GAP" evidence="6">
    <location>
        <begin position="459"/>
        <end position="667"/>
    </location>
</feature>
<feature type="region of interest" description="Disordered" evidence="7">
    <location>
        <begin position="92"/>
        <end position="113"/>
    </location>
</feature>
<feature type="region of interest" description="Disordered" evidence="7">
    <location>
        <begin position="373"/>
        <end position="394"/>
    </location>
</feature>
<feature type="region of interest" description="Disordered" evidence="7">
    <location>
        <begin position="725"/>
        <end position="754"/>
    </location>
</feature>
<feature type="region of interest" description="Disordered" evidence="7">
    <location>
        <begin position="781"/>
        <end position="809"/>
    </location>
</feature>
<feature type="region of interest" description="Disordered" evidence="7">
    <location>
        <begin position="932"/>
        <end position="1017"/>
    </location>
</feature>
<feature type="region of interest" description="Disordered" evidence="7">
    <location>
        <begin position="1034"/>
        <end position="1150"/>
    </location>
</feature>
<feature type="region of interest" description="Disordered" evidence="7">
    <location>
        <begin position="1274"/>
        <end position="1340"/>
    </location>
</feature>
<feature type="short sequence motif" description="SH3-binding" evidence="3">
    <location>
        <begin position="785"/>
        <end position="815"/>
    </location>
</feature>
<feature type="compositionally biased region" description="Basic and acidic residues" evidence="7">
    <location>
        <begin position="92"/>
        <end position="102"/>
    </location>
</feature>
<feature type="compositionally biased region" description="Polar residues" evidence="7">
    <location>
        <begin position="725"/>
        <end position="736"/>
    </location>
</feature>
<feature type="compositionally biased region" description="Basic residues" evidence="7">
    <location>
        <begin position="956"/>
        <end position="967"/>
    </location>
</feature>
<feature type="compositionally biased region" description="Gly residues" evidence="7">
    <location>
        <begin position="1048"/>
        <end position="1060"/>
    </location>
</feature>
<feature type="compositionally biased region" description="Polar residues" evidence="7">
    <location>
        <begin position="1069"/>
        <end position="1093"/>
    </location>
</feature>
<feature type="compositionally biased region" description="Gly residues" evidence="7">
    <location>
        <begin position="1111"/>
        <end position="1126"/>
    </location>
</feature>
<feature type="compositionally biased region" description="Polar residues" evidence="7">
    <location>
        <begin position="1130"/>
        <end position="1145"/>
    </location>
</feature>
<feature type="compositionally biased region" description="Basic and acidic residues" evidence="7">
    <location>
        <begin position="1274"/>
        <end position="1293"/>
    </location>
</feature>
<feature type="site" description="Arginine finger; crucial for GTP hydrolysis by stabilizing the transition state" evidence="6">
    <location>
        <position position="485"/>
    </location>
</feature>
<feature type="modified residue" description="Phosphotyrosine" evidence="10">
    <location>
        <position position="34"/>
    </location>
</feature>
<feature type="modified residue" description="Phosphotyrosine" evidence="10">
    <location>
        <position position="39"/>
    </location>
</feature>
<feature type="modified residue" description="Phosphoserine" evidence="2">
    <location>
        <position position="117"/>
    </location>
</feature>
<feature type="modified residue" description="Phosphoserine" evidence="11">
    <location>
        <position position="371"/>
    </location>
</feature>
<feature type="modified residue" description="Phosphoserine; by PLK2" evidence="2">
    <location>
        <position position="379"/>
    </location>
</feature>
<feature type="modified residue" description="Phosphoserine; by PLK2" evidence="2">
    <location>
        <position position="385"/>
    </location>
</feature>
<feature type="modified residue" description="Phosphoserine; by PLK2" evidence="2">
    <location>
        <position position="449"/>
    </location>
</feature>
<feature type="modified residue" description="Phosphoserine; by PLK2" evidence="2">
    <location>
        <position position="466"/>
    </location>
</feature>
<feature type="modified residue" description="Phosphoserine" evidence="2">
    <location>
        <position position="752"/>
    </location>
</feature>
<feature type="modified residue" description="Phosphoserine" evidence="2">
    <location>
        <position position="766"/>
    </location>
</feature>
<feature type="modified residue" description="Phosphoserine" evidence="2">
    <location>
        <position position="780"/>
    </location>
</feature>
<feature type="modified residue" description="Phosphoserine" evidence="11">
    <location>
        <position position="823"/>
    </location>
</feature>
<feature type="modified residue" description="Phosphoserine" evidence="11">
    <location>
        <position position="825"/>
    </location>
</feature>
<feature type="modified residue" description="Phosphothreonine" evidence="11">
    <location>
        <position position="828"/>
    </location>
</feature>
<feature type="modified residue" description="Phosphoserine; by PLK2" evidence="2">
    <location>
        <position position="836"/>
    </location>
</feature>
<feature type="modified residue" description="Phosphoserine; by PLK2" evidence="2">
    <location>
        <position position="840"/>
    </location>
</feature>
<feature type="modified residue" description="Phosphoserine; by PLK2" evidence="2">
    <location>
        <position position="842"/>
    </location>
</feature>
<feature type="modified residue" description="Phosphoserine" evidence="11">
    <location>
        <position position="876"/>
    </location>
</feature>
<feature type="modified residue" description="Phosphoserine" evidence="2">
    <location>
        <position position="892"/>
    </location>
</feature>
<feature type="modified residue" description="Phosphoserine" evidence="11">
    <location>
        <position position="895"/>
    </location>
</feature>
<feature type="modified residue" description="Phosphoserine" evidence="11">
    <location>
        <position position="898"/>
    </location>
</feature>
<feature type="modified residue" description="Phosphoserine" evidence="11">
    <location>
        <position position="985"/>
    </location>
</feature>
<feature type="modified residue" description="Phosphoserine" evidence="2">
    <location>
        <position position="1111"/>
    </location>
</feature>
<feature type="modified residue" description="Phosphoserine" evidence="2">
    <location>
        <position position="1115"/>
    </location>
</feature>
<feature type="modified residue" description="Phosphoserine" evidence="2">
    <location>
        <position position="1118"/>
    </location>
</feature>
<feature type="modified residue" description="Phosphoserine" evidence="11">
    <location>
        <position position="1162"/>
    </location>
</feature>
<feature type="modified residue" description="Phosphoserine" evidence="9 11">
    <location>
        <position position="1201"/>
    </location>
</feature>
<feature type="helix" evidence="12">
    <location>
        <begin position="1188"/>
        <end position="1191"/>
    </location>
</feature>
<feature type="helix" evidence="12">
    <location>
        <begin position="1194"/>
        <end position="1272"/>
    </location>
</feature>
<accession>F6SEU4</accession>
<comment type="function">
    <text evidence="1">Major constituent of the PSD essential for postsynaptic signaling. Inhibitory regulator of the Ras-cAMP pathway. Member of the NMDAR signaling complex in excitatory synapses, it may play a role in NMDAR-dependent control of AMPAR potentiation, AMPAR membrane trafficking and synaptic plasticity. Regulates AMPAR-mediated miniature excitatory postsynaptic currents. Exhibits dual GTPase-activating specificity for Ras and Rap. May be involved in certain forms of brain injury, leading to long-term learning and memory deficits (By similarity).</text>
</comment>
<comment type="subunit">
    <text evidence="2 8">Interacts with KLHL17, CAMK2A and CAMK2B (By similarity). Interacts with MPDZ (By similarity). Interacts with FAM81A; the interaction facilitates condensate formation via liquid-liquid phase separation (PubMed:38452102).</text>
</comment>
<comment type="interaction">
    <interactant intactId="EBI-5797569">
        <id>F6SEU4</id>
    </interactant>
    <interactant intactId="EBI-400152">
        <id>Q9D415</id>
        <label>Dlgap1</label>
    </interactant>
    <organismsDiffer>false</organismsDiffer>
    <experiments>3</experiments>
</comment>
<comment type="interaction">
    <interactant intactId="EBI-5797569">
        <id>F6SEU4</id>
    </interactant>
    <interactant intactId="EBI-1798780">
        <id>P16056</id>
        <label>Met</label>
    </interactant>
    <organismsDiffer>false</organismsDiffer>
    <experiments>3</experiments>
</comment>
<comment type="subcellular location">
    <subcellularLocation>
        <location evidence="1">Membrane</location>
        <topology evidence="1">Peripheral membrane protein</topology>
    </subcellularLocation>
    <subcellularLocation>
        <location evidence="1">Synapse</location>
    </subcellularLocation>
    <text evidence="1">Mostly in excitatory glutamatergic synapses (By similarity). receptor activation or SYNGAP1/MPDZ complex disruption. Phosphorylation by PLK2 promotes its activity (By similarity).</text>
</comment>
<comment type="domain">
    <text evidence="1">The C2 domain is required for RapGAP activity.</text>
</comment>
<reference key="1">
    <citation type="journal article" date="2009" name="PLoS Biol.">
        <title>Lineage-specific biology revealed by a finished genome assembly of the mouse.</title>
        <authorList>
            <person name="Church D.M."/>
            <person name="Goodstadt L."/>
            <person name="Hillier L.W."/>
            <person name="Zody M.C."/>
            <person name="Goldstein S."/>
            <person name="She X."/>
            <person name="Bult C.J."/>
            <person name="Agarwala R."/>
            <person name="Cherry J.L."/>
            <person name="DiCuccio M."/>
            <person name="Hlavina W."/>
            <person name="Kapustin Y."/>
            <person name="Meric P."/>
            <person name="Maglott D."/>
            <person name="Birtle Z."/>
            <person name="Marques A.C."/>
            <person name="Graves T."/>
            <person name="Zhou S."/>
            <person name="Teague B."/>
            <person name="Potamousis K."/>
            <person name="Churas C."/>
            <person name="Place M."/>
            <person name="Herschleb J."/>
            <person name="Runnheim R."/>
            <person name="Forrest D."/>
            <person name="Amos-Landgraf J."/>
            <person name="Schwartz D.C."/>
            <person name="Cheng Z."/>
            <person name="Lindblad-Toh K."/>
            <person name="Eichler E.E."/>
            <person name="Ponting C.P."/>
        </authorList>
    </citation>
    <scope>NUCLEOTIDE SEQUENCE [LARGE SCALE GENOMIC DNA]</scope>
    <source>
        <strain>C57BL/6J</strain>
    </source>
</reference>
<reference key="2">
    <citation type="journal article" date="2006" name="Mol. Cell. Proteomics">
        <title>Comprehensive identification of phosphorylation sites in postsynaptic density preparations.</title>
        <authorList>
            <person name="Trinidad J.C."/>
            <person name="Specht C.G."/>
            <person name="Thalhammer A."/>
            <person name="Schoepfer R."/>
            <person name="Burlingame A.L."/>
        </authorList>
    </citation>
    <scope>PHOSPHORYLATION [LARGE SCALE ANALYSIS] AT SER-1201</scope>
    <scope>IDENTIFICATION BY MASS SPECTROMETRY [LARGE SCALE ANALYSIS]</scope>
    <source>
        <tissue>Brain</tissue>
    </source>
</reference>
<reference key="3">
    <citation type="journal article" date="2008" name="J. Proteome Res.">
        <title>Large-scale identification and evolution indexing of tyrosine phosphorylation sites from murine brain.</title>
        <authorList>
            <person name="Ballif B.A."/>
            <person name="Carey G.R."/>
            <person name="Sunyaev S.R."/>
            <person name="Gygi S.P."/>
        </authorList>
    </citation>
    <scope>PHOSPHORYLATION [LARGE SCALE ANALYSIS] AT TYR-34 AND TYR-39</scope>
    <scope>IDENTIFICATION BY MASS SPECTROMETRY [LARGE SCALE ANALYSIS]</scope>
    <source>
        <tissue>Brain</tissue>
    </source>
</reference>
<reference key="4">
    <citation type="journal article" date="2010" name="Cell">
        <title>A tissue-specific atlas of mouse protein phosphorylation and expression.</title>
        <authorList>
            <person name="Huttlin E.L."/>
            <person name="Jedrychowski M.P."/>
            <person name="Elias J.E."/>
            <person name="Goswami T."/>
            <person name="Rad R."/>
            <person name="Beausoleil S.A."/>
            <person name="Villen J."/>
            <person name="Haas W."/>
            <person name="Sowa M.E."/>
            <person name="Gygi S.P."/>
        </authorList>
    </citation>
    <scope>PHOSPHORYLATION [LARGE SCALE ANALYSIS] AT SER-371; SER-823; SER-825; THR-828; SER-876; SER-895; SER-898; SER-985; SER-1162 AND SER-1201</scope>
    <scope>IDENTIFICATION BY MASS SPECTROMETRY [LARGE SCALE ANALYSIS]</scope>
    <source>
        <tissue>Brain</tissue>
    </source>
</reference>
<reference key="5">
    <citation type="journal article" date="2024" name="PLoS Biol.">
        <title>FAM81A is a postsynaptic protein that regulates the condensation of postsynaptic proteins via liquid-liquid phase separation.</title>
        <authorList>
            <person name="Kaizuka T."/>
            <person name="Hirouchi T."/>
            <person name="Saneyoshi T."/>
            <person name="Shirafuji T."/>
            <person name="Collins M.O."/>
            <person name="Grant S.G.N."/>
            <person name="Hayashi Y."/>
            <person name="Takumi T."/>
        </authorList>
    </citation>
    <scope>INTERACTION WITH FAM81A</scope>
</reference>
<protein>
    <recommendedName>
        <fullName>Ras/Rap GTPase-activating protein SynGAP</fullName>
    </recommendedName>
    <alternativeName>
        <fullName>Neuronal RasGAP</fullName>
    </alternativeName>
    <alternativeName>
        <fullName>Synaptic Ras GTPase-activating protein 1</fullName>
        <shortName>Synaptic Ras-GAP 1</shortName>
    </alternativeName>
</protein>
<evidence type="ECO:0000250" key="1"/>
<evidence type="ECO:0000250" key="2">
    <source>
        <dbReference type="UniProtKB" id="Q9QUH6"/>
    </source>
</evidence>
<evidence type="ECO:0000255" key="3"/>
<evidence type="ECO:0000255" key="4">
    <source>
        <dbReference type="PROSITE-ProRule" id="PRU00041"/>
    </source>
</evidence>
<evidence type="ECO:0000255" key="5">
    <source>
        <dbReference type="PROSITE-ProRule" id="PRU00145"/>
    </source>
</evidence>
<evidence type="ECO:0000255" key="6">
    <source>
        <dbReference type="PROSITE-ProRule" id="PRU00167"/>
    </source>
</evidence>
<evidence type="ECO:0000256" key="7">
    <source>
        <dbReference type="SAM" id="MobiDB-lite"/>
    </source>
</evidence>
<evidence type="ECO:0000269" key="8">
    <source>
    </source>
</evidence>
<evidence type="ECO:0007744" key="9">
    <source>
    </source>
</evidence>
<evidence type="ECO:0007744" key="10">
    <source>
    </source>
</evidence>
<evidence type="ECO:0007744" key="11">
    <source>
    </source>
</evidence>
<evidence type="ECO:0007829" key="12">
    <source>
        <dbReference type="PDB" id="5JXC"/>
    </source>
</evidence>
<organism>
    <name type="scientific">Mus musculus</name>
    <name type="common">Mouse</name>
    <dbReference type="NCBI Taxonomy" id="10090"/>
    <lineage>
        <taxon>Eukaryota</taxon>
        <taxon>Metazoa</taxon>
        <taxon>Chordata</taxon>
        <taxon>Craniata</taxon>
        <taxon>Vertebrata</taxon>
        <taxon>Euteleostomi</taxon>
        <taxon>Mammalia</taxon>
        <taxon>Eutheria</taxon>
        <taxon>Euarchontoglires</taxon>
        <taxon>Glires</taxon>
        <taxon>Rodentia</taxon>
        <taxon>Myomorpha</taxon>
        <taxon>Muroidea</taxon>
        <taxon>Muridae</taxon>
        <taxon>Murinae</taxon>
        <taxon>Mus</taxon>
        <taxon>Mus</taxon>
    </lineage>
</organism>
<dbReference type="EMBL" id="AC144621">
    <property type="status" value="NOT_ANNOTATED_CDS"/>
    <property type="molecule type" value="Genomic_DNA"/>
</dbReference>
<dbReference type="CCDS" id="CCDS59625.1"/>
<dbReference type="RefSeq" id="NP_001268420.1">
    <property type="nucleotide sequence ID" value="NM_001281491.2"/>
</dbReference>
<dbReference type="PDB" id="5JXC">
    <property type="method" value="X-ray"/>
    <property type="resolution" value="2.50 A"/>
    <property type="chains" value="A/B/C/D/E/F=1185-1274"/>
</dbReference>
<dbReference type="PDBsum" id="5JXC"/>
<dbReference type="SMR" id="F6SEU4"/>
<dbReference type="BioGRID" id="232153">
    <property type="interactions" value="269"/>
</dbReference>
<dbReference type="CORUM" id="F6SEU4"/>
<dbReference type="FunCoup" id="F6SEU4">
    <property type="interactions" value="968"/>
</dbReference>
<dbReference type="IntAct" id="F6SEU4">
    <property type="interactions" value="139"/>
</dbReference>
<dbReference type="MINT" id="F6SEU4"/>
<dbReference type="STRING" id="10090.ENSMUSP00000141686"/>
<dbReference type="GlyGen" id="F6SEU4">
    <property type="glycosylation" value="14 sites, 2 N-linked glycans (2 sites), 1 O-linked glycan (12 sites)"/>
</dbReference>
<dbReference type="iPTMnet" id="F6SEU4"/>
<dbReference type="PhosphoSitePlus" id="F6SEU4"/>
<dbReference type="SwissPalm" id="F6SEU4"/>
<dbReference type="PaxDb" id="10090-ENSMUSP00000080038"/>
<dbReference type="PeptideAtlas" id="F6SEU4"/>
<dbReference type="ProteomicsDB" id="253435"/>
<dbReference type="Antibodypedia" id="29204">
    <property type="antibodies" value="247 antibodies from 34 providers"/>
</dbReference>
<dbReference type="DNASU" id="240057"/>
<dbReference type="Ensembl" id="ENSMUST00000194598.6">
    <property type="protein sequence ID" value="ENSMUSP00000141686.2"/>
    <property type="gene ID" value="ENSMUSG00000067629.14"/>
</dbReference>
<dbReference type="GeneID" id="240057"/>
<dbReference type="KEGG" id="mmu:240057"/>
<dbReference type="UCSC" id="uc008bfa.2">
    <property type="organism name" value="mouse"/>
</dbReference>
<dbReference type="AGR" id="MGI:3039785"/>
<dbReference type="CTD" id="8831"/>
<dbReference type="MGI" id="MGI:3039785">
    <property type="gene designation" value="Syngap1"/>
</dbReference>
<dbReference type="VEuPathDB" id="HostDB:ENSMUSG00000067629"/>
<dbReference type="eggNOG" id="KOG3508">
    <property type="taxonomic scope" value="Eukaryota"/>
</dbReference>
<dbReference type="GeneTree" id="ENSGT00940000158438"/>
<dbReference type="InParanoid" id="F6SEU4"/>
<dbReference type="OMA" id="DPCVNTE"/>
<dbReference type="OrthoDB" id="5572587at2759"/>
<dbReference type="PhylomeDB" id="F6SEU4"/>
<dbReference type="TreeFam" id="TF105303"/>
<dbReference type="Reactome" id="R-MMU-5658442">
    <property type="pathway name" value="Regulation of RAS by GAPs"/>
</dbReference>
<dbReference type="BioGRID-ORCS" id="240057">
    <property type="hits" value="4 hits in 73 CRISPR screens"/>
</dbReference>
<dbReference type="CD-CODE" id="CE726F99">
    <property type="entry name" value="Postsynaptic density"/>
</dbReference>
<dbReference type="ChiTaRS" id="Syngap1">
    <property type="organism name" value="mouse"/>
</dbReference>
<dbReference type="PRO" id="PR:F6SEU4"/>
<dbReference type="Proteomes" id="UP000000589">
    <property type="component" value="Chromosome 17"/>
</dbReference>
<dbReference type="RNAct" id="F6SEU4">
    <property type="molecule type" value="protein"/>
</dbReference>
<dbReference type="Bgee" id="ENSMUSG00000067629">
    <property type="expression patterns" value="Expressed in primary visual cortex and 73 other cell types or tissues"/>
</dbReference>
<dbReference type="ExpressionAtlas" id="F6SEU4">
    <property type="expression patterns" value="baseline and differential"/>
</dbReference>
<dbReference type="GO" id="GO:0043198">
    <property type="term" value="C:dendritic shaft"/>
    <property type="evidence" value="ECO:0000314"/>
    <property type="project" value="MGI"/>
</dbReference>
<dbReference type="GO" id="GO:0098978">
    <property type="term" value="C:glutamatergic synapse"/>
    <property type="evidence" value="ECO:0000314"/>
    <property type="project" value="SynGO"/>
</dbReference>
<dbReference type="GO" id="GO:0016020">
    <property type="term" value="C:membrane"/>
    <property type="evidence" value="ECO:0000314"/>
    <property type="project" value="MGI"/>
</dbReference>
<dbReference type="GO" id="GO:0005886">
    <property type="term" value="C:plasma membrane"/>
    <property type="evidence" value="ECO:0007669"/>
    <property type="project" value="GOC"/>
</dbReference>
<dbReference type="GO" id="GO:0014069">
    <property type="term" value="C:postsynaptic density"/>
    <property type="evidence" value="ECO:0000314"/>
    <property type="project" value="MGI"/>
</dbReference>
<dbReference type="GO" id="GO:0005096">
    <property type="term" value="F:GTPase activator activity"/>
    <property type="evidence" value="ECO:0000314"/>
    <property type="project" value="MGI"/>
</dbReference>
<dbReference type="GO" id="GO:0017124">
    <property type="term" value="F:SH3 domain binding"/>
    <property type="evidence" value="ECO:0007669"/>
    <property type="project" value="UniProtKB-KW"/>
</dbReference>
<dbReference type="GO" id="GO:0007409">
    <property type="term" value="P:axonogenesis"/>
    <property type="evidence" value="ECO:0000314"/>
    <property type="project" value="MGI"/>
</dbReference>
<dbReference type="GO" id="GO:0016358">
    <property type="term" value="P:dendrite development"/>
    <property type="evidence" value="ECO:0000315"/>
    <property type="project" value="MGI"/>
</dbReference>
<dbReference type="GO" id="GO:0098880">
    <property type="term" value="P:maintenance of postsynaptic specialization structure"/>
    <property type="evidence" value="ECO:0000314"/>
    <property type="project" value="SynGO"/>
</dbReference>
<dbReference type="GO" id="GO:0050804">
    <property type="term" value="P:modulation of chemical synaptic transmission"/>
    <property type="evidence" value="ECO:0000314"/>
    <property type="project" value="SynGO"/>
</dbReference>
<dbReference type="GO" id="GO:0050771">
    <property type="term" value="P:negative regulation of axonogenesis"/>
    <property type="evidence" value="ECO:0000314"/>
    <property type="project" value="MGI"/>
</dbReference>
<dbReference type="GO" id="GO:0043524">
    <property type="term" value="P:negative regulation of neuron apoptotic process"/>
    <property type="evidence" value="ECO:0000315"/>
    <property type="project" value="MGI"/>
</dbReference>
<dbReference type="GO" id="GO:0046580">
    <property type="term" value="P:negative regulation of Ras protein signal transduction"/>
    <property type="evidence" value="ECO:0000250"/>
    <property type="project" value="UniProtKB"/>
</dbReference>
<dbReference type="GO" id="GO:0051402">
    <property type="term" value="P:neuron apoptotic process"/>
    <property type="evidence" value="ECO:0000315"/>
    <property type="project" value="MGI"/>
</dbReference>
<dbReference type="GO" id="GO:0007389">
    <property type="term" value="P:pattern specification process"/>
    <property type="evidence" value="ECO:0000315"/>
    <property type="project" value="MGI"/>
</dbReference>
<dbReference type="GO" id="GO:0007265">
    <property type="term" value="P:Ras protein signal transduction"/>
    <property type="evidence" value="ECO:0000314"/>
    <property type="project" value="MGI"/>
</dbReference>
<dbReference type="GO" id="GO:0043113">
    <property type="term" value="P:receptor clustering"/>
    <property type="evidence" value="ECO:0000315"/>
    <property type="project" value="MGI"/>
</dbReference>
<dbReference type="GO" id="GO:0048169">
    <property type="term" value="P:regulation of long-term neuronal synaptic plasticity"/>
    <property type="evidence" value="ECO:0000315"/>
    <property type="project" value="MGI"/>
</dbReference>
<dbReference type="GO" id="GO:0043408">
    <property type="term" value="P:regulation of MAPK cascade"/>
    <property type="evidence" value="ECO:0000315"/>
    <property type="project" value="MGI"/>
</dbReference>
<dbReference type="GO" id="GO:0050803">
    <property type="term" value="P:regulation of synapse structure or activity"/>
    <property type="evidence" value="ECO:0000315"/>
    <property type="project" value="MGI"/>
</dbReference>
<dbReference type="GO" id="GO:0048167">
    <property type="term" value="P:regulation of synaptic plasticity"/>
    <property type="evidence" value="ECO:0000250"/>
    <property type="project" value="UniProtKB"/>
</dbReference>
<dbReference type="GO" id="GO:0008542">
    <property type="term" value="P:visual learning"/>
    <property type="evidence" value="ECO:0000315"/>
    <property type="project" value="MGI"/>
</dbReference>
<dbReference type="CDD" id="cd04013">
    <property type="entry name" value="C2_SynGAP_like"/>
    <property type="match status" value="1"/>
</dbReference>
<dbReference type="CDD" id="cd13375">
    <property type="entry name" value="PH_SynGAP"/>
    <property type="match status" value="1"/>
</dbReference>
<dbReference type="CDD" id="cd05136">
    <property type="entry name" value="RasGAP_DAB2IP"/>
    <property type="match status" value="1"/>
</dbReference>
<dbReference type="CDD" id="cd22265">
    <property type="entry name" value="UDM1_RNF168"/>
    <property type="match status" value="1"/>
</dbReference>
<dbReference type="FunFam" id="1.10.506.10:FF:000001">
    <property type="entry name" value="Ras GTPase-activating protein nGAP isoform 2"/>
    <property type="match status" value="1"/>
</dbReference>
<dbReference type="FunFam" id="2.60.40.150:FF:000010">
    <property type="entry name" value="Ras GTPase-activating protein nGAP isoform 2"/>
    <property type="match status" value="1"/>
</dbReference>
<dbReference type="Gene3D" id="2.60.40.150">
    <property type="entry name" value="C2 domain"/>
    <property type="match status" value="1"/>
</dbReference>
<dbReference type="Gene3D" id="1.10.506.10">
    <property type="entry name" value="GTPase Activation - p120gap, domain 1"/>
    <property type="match status" value="2"/>
</dbReference>
<dbReference type="Gene3D" id="2.30.29.30">
    <property type="entry name" value="Pleckstrin-homology domain (PH domain)/Phosphotyrosine-binding domain (PTB)"/>
    <property type="match status" value="1"/>
</dbReference>
<dbReference type="InterPro" id="IPR000008">
    <property type="entry name" value="C2_dom"/>
</dbReference>
<dbReference type="InterPro" id="IPR035892">
    <property type="entry name" value="C2_domain_sf"/>
</dbReference>
<dbReference type="InterPro" id="IPR021887">
    <property type="entry name" value="DAB2P_C"/>
</dbReference>
<dbReference type="InterPro" id="IPR011993">
    <property type="entry name" value="PH-like_dom_sf"/>
</dbReference>
<dbReference type="InterPro" id="IPR001849">
    <property type="entry name" value="PH_domain"/>
</dbReference>
<dbReference type="InterPro" id="IPR039360">
    <property type="entry name" value="Ras_GTPase"/>
</dbReference>
<dbReference type="InterPro" id="IPR023152">
    <property type="entry name" value="RasGAP_CS"/>
</dbReference>
<dbReference type="InterPro" id="IPR001936">
    <property type="entry name" value="RasGAP_dom"/>
</dbReference>
<dbReference type="InterPro" id="IPR008936">
    <property type="entry name" value="Rho_GTPase_activation_prot"/>
</dbReference>
<dbReference type="InterPro" id="IPR037779">
    <property type="entry name" value="SynGAP_PH"/>
</dbReference>
<dbReference type="PANTHER" id="PTHR10194">
    <property type="entry name" value="RAS GTPASE-ACTIVATING PROTEINS"/>
    <property type="match status" value="1"/>
</dbReference>
<dbReference type="PANTHER" id="PTHR10194:SF25">
    <property type="entry name" value="RAS_RAP GTPASE-ACTIVATING PROTEIN SYNGAP"/>
    <property type="match status" value="1"/>
</dbReference>
<dbReference type="Pfam" id="PF00168">
    <property type="entry name" value="C2"/>
    <property type="match status" value="1"/>
</dbReference>
<dbReference type="Pfam" id="PF12004">
    <property type="entry name" value="DAB2P_C"/>
    <property type="match status" value="1"/>
</dbReference>
<dbReference type="Pfam" id="PF25321">
    <property type="entry name" value="PH_RASGAP"/>
    <property type="match status" value="1"/>
</dbReference>
<dbReference type="Pfam" id="PF00616">
    <property type="entry name" value="RasGAP"/>
    <property type="match status" value="2"/>
</dbReference>
<dbReference type="SMART" id="SM00239">
    <property type="entry name" value="C2"/>
    <property type="match status" value="1"/>
</dbReference>
<dbReference type="SMART" id="SM00233">
    <property type="entry name" value="PH"/>
    <property type="match status" value="1"/>
</dbReference>
<dbReference type="SMART" id="SM00323">
    <property type="entry name" value="RasGAP"/>
    <property type="match status" value="1"/>
</dbReference>
<dbReference type="SUPFAM" id="SSF49562">
    <property type="entry name" value="C2 domain (Calcium/lipid-binding domain, CaLB)"/>
    <property type="match status" value="1"/>
</dbReference>
<dbReference type="SUPFAM" id="SSF48350">
    <property type="entry name" value="GTPase activation domain, GAP"/>
    <property type="match status" value="1"/>
</dbReference>
<dbReference type="SUPFAM" id="SSF50729">
    <property type="entry name" value="PH domain-like"/>
    <property type="match status" value="1"/>
</dbReference>
<dbReference type="PROSITE" id="PS50004">
    <property type="entry name" value="C2"/>
    <property type="match status" value="1"/>
</dbReference>
<dbReference type="PROSITE" id="PS50003">
    <property type="entry name" value="PH_DOMAIN"/>
    <property type="match status" value="1"/>
</dbReference>
<dbReference type="PROSITE" id="PS00509">
    <property type="entry name" value="RAS_GTPASE_ACTIV_1"/>
    <property type="match status" value="1"/>
</dbReference>
<dbReference type="PROSITE" id="PS50018">
    <property type="entry name" value="RAS_GTPASE_ACTIV_2"/>
    <property type="match status" value="1"/>
</dbReference>
<sequence length="1340" mass="148238">MSRSRASIHRGSIPAMSYAPFRDVRGPPMHRTQYVHSPYDRPGWNPRFCIISGNQLLMLDEDEIHPLLIRDRRSESSRNKLLRRTVSVPVEGRPHGEHEYHLGRSRRKSVPGGKQYSMEAAPAAPFRPSQGFLSRRLKSSIKRTKSQPKLDRTSSFRQILPRFRSADHDRARLMQSFKESHSHESLLSPSSAAEALELNLDEDSIIKPVHSSILGQEFCFEVTTSSGTKCFACRSAAERDKWIENLQRAVKPNKDNSRRVDNVLKLWIIEARELPPKKRYYCELCLDDMLYARTTSKPRSASGDTVFWGEHFEFNNLPAVRALRLHLYRDSDKKRKKDKAGYVGLVTVPVATLAGRHFTEQWYPVTLPTGSGGSGGMGSGGGGGSGGGSGGKGKGGCPAVRLKARYQTMSILPMELYKEFAEYVTNHYRMLCAVLEPALNVKGKEEVASALVHILQSTGKAKDFLSDMAMSEVDRFMEREHLIFRENTLATKAIEEYMRLIGQKYLKDAIGEFIRALYESEENCEVDPIKCTASSLAEHQANLRMCCELALCKVVNSHCVFPRELKEVFASWRLRCAERGREDIADRLISASLFLRFLCPAIMSPSLFGLMQEYPDEQTSRTLTLIAKVIQNLANFSKFTSKEDFLGFMNEFLELEWGSMQQFLYEISNLDTLTNSSSFEGYIDLGRELSTLHALLWEVLPQLSKEALLKLGPLPRLLNDISTALRNPNIQRQPSRQSERTRSQPMVLRGPSAEMQGYMMRDLNSSIDLQSFMARGLNSSMDMARLPSPTKEKPPPPPPGGGKDLFYVSRPPLARSSPAYCTSSSDITEPEQKMLSVNKSVSMLDLQGDGPGGRLNSSSVSNLAAVGDLLHSSQASLTAALGLRPAPAGRLSQGSGSSITAAGMRLSQMGVTTDGVPAQQLRIPLSFQNPLFHMAADGPGPPAGHGGSSGHGPPSSHHHHHHHHHHRGGEPPGDTFAPFHGYSKSEDLSSGVPKPPAASILHSHSYSDEFGPSGTDFTRRQLSLQDSLQHMLSPPQITIGPQRPAPSGPGGGSGGGSGGGQPPPLQRGKSQQLTVSAAQKPRPSSGNLLQSPEPSYGPARPRQQSLSKEGSIGGSGGSGGGGGGGLKPSITKQHSQTPSTLNPTMPASERTVAWVSNMPHLSADIESAHIEREEYKLKEYSKSMDESRLDRVKEYEEEIHSLKERLHMSNRKLEEYERRLLSQEEQTSKILMQYQARLEQSEKRLRQQQVEKDSQIKSIIGRLMLVEEELRRDHPAMAEPLPEPKKRLLDAQERQLPPLGPTNPRVTLAPPWNGLAPPAPPPPPRLQITENGEFRNTADH</sequence>
<proteinExistence type="evidence at protein level"/>
<name>SYGP1_MOUSE</name>
<keyword id="KW-0002">3D-structure</keyword>
<keyword id="KW-0343">GTPase activation</keyword>
<keyword id="KW-0472">Membrane</keyword>
<keyword id="KW-0597">Phosphoprotein</keyword>
<keyword id="KW-1185">Reference proteome</keyword>
<keyword id="KW-0729">SH3-binding</keyword>
<keyword id="KW-0770">Synapse</keyword>
<gene>
    <name type="primary">Syngap1</name>
</gene>